<protein>
    <recommendedName>
        <fullName evidence="5">Zinc transporter ZIPB</fullName>
    </recommendedName>
    <alternativeName>
        <fullName evidence="6">BbZIP</fullName>
    </alternativeName>
</protein>
<gene>
    <name evidence="10" type="ordered locus">BB2405</name>
</gene>
<sequence length="309" mass="30988">MNQPSSLAADLRGAWHAQAQSHPLITLGLAASAAGVVLLLVAGIVNALTGENRVHVGYAVLGGAAGFAATALGALMALGLRAISARTQDAMLGFAAGMMLAASAFSLILPGLDAAGTIVGPGPAAAAVVALGLGLGVLLMLGLDYFTPHEHERTGHQGPEAARVNRVWLFVLTIILHNLPEGMAIGVSFATGDLRIGLPLTSAIAIQDVPEGLAVALALRAVGLPIGRAVLVAVASGLMEPLGALVGVGISSGFALAYPISMGLAAGAMIFVVSHEVIPETHRNGHETTATVGLMAGFALMMFLDTALG</sequence>
<dbReference type="EMBL" id="BX640444">
    <property type="protein sequence ID" value="CAE32899.1"/>
    <property type="molecule type" value="Genomic_DNA"/>
</dbReference>
<dbReference type="RefSeq" id="WP_010926504.1">
    <property type="nucleotide sequence ID" value="NC_002927.3"/>
</dbReference>
<dbReference type="PDB" id="5TSA">
    <property type="method" value="X-ray"/>
    <property type="resolution" value="2.40 A"/>
    <property type="chains" value="A=1-309"/>
</dbReference>
<dbReference type="PDB" id="5TSB">
    <property type="method" value="X-ray"/>
    <property type="resolution" value="2.70 A"/>
    <property type="chains" value="A=1-309"/>
</dbReference>
<dbReference type="PDB" id="6PGI">
    <property type="method" value="X-ray"/>
    <property type="resolution" value="3.50 A"/>
    <property type="chains" value="A=1-309"/>
</dbReference>
<dbReference type="PDB" id="7Z6M">
    <property type="method" value="X-ray"/>
    <property type="resolution" value="2.51 A"/>
    <property type="chains" value="A=1-309"/>
</dbReference>
<dbReference type="PDB" id="7Z6N">
    <property type="method" value="X-ray"/>
    <property type="resolution" value="2.57 A"/>
    <property type="chains" value="A/B=1-309"/>
</dbReference>
<dbReference type="PDB" id="8CZJ">
    <property type="method" value="X-ray"/>
    <property type="resolution" value="2.75 A"/>
    <property type="chains" value="A/B=1-309"/>
</dbReference>
<dbReference type="PDB" id="8GHT">
    <property type="method" value="EM"/>
    <property type="resolution" value="3.05 A"/>
    <property type="chains" value="A/B=1-309"/>
</dbReference>
<dbReference type="PDB" id="8J1M">
    <property type="method" value="X-ray"/>
    <property type="resolution" value="1.95 A"/>
    <property type="chains" value="A=21-309"/>
</dbReference>
<dbReference type="PDBsum" id="5TSA"/>
<dbReference type="PDBsum" id="5TSB"/>
<dbReference type="PDBsum" id="6PGI"/>
<dbReference type="PDBsum" id="7Z6M"/>
<dbReference type="PDBsum" id="7Z6N"/>
<dbReference type="PDBsum" id="8CZJ"/>
<dbReference type="PDBsum" id="8GHT"/>
<dbReference type="PDBsum" id="8J1M"/>
<dbReference type="EMDB" id="EMD-40050"/>
<dbReference type="SMR" id="A0A0H3LM39"/>
<dbReference type="KEGG" id="bbr:BB2405"/>
<dbReference type="eggNOG" id="COG0428">
    <property type="taxonomic scope" value="Bacteria"/>
</dbReference>
<dbReference type="HOGENOM" id="CLU_015114_1_2_4"/>
<dbReference type="Proteomes" id="UP000001027">
    <property type="component" value="Chromosome"/>
</dbReference>
<dbReference type="GO" id="GO:0005886">
    <property type="term" value="C:plasma membrane"/>
    <property type="evidence" value="ECO:0007669"/>
    <property type="project" value="UniProtKB-SubCell"/>
</dbReference>
<dbReference type="GO" id="GO:0005385">
    <property type="term" value="F:zinc ion transmembrane transporter activity"/>
    <property type="evidence" value="ECO:0007669"/>
    <property type="project" value="TreeGrafter"/>
</dbReference>
<dbReference type="InterPro" id="IPR003689">
    <property type="entry name" value="ZIP"/>
</dbReference>
<dbReference type="PANTHER" id="PTHR11040:SF211">
    <property type="entry name" value="ZINC TRANSPORTER ZIP11"/>
    <property type="match status" value="1"/>
</dbReference>
<dbReference type="PANTHER" id="PTHR11040">
    <property type="entry name" value="ZINC/IRON TRANSPORTER"/>
    <property type="match status" value="1"/>
</dbReference>
<dbReference type="Pfam" id="PF02535">
    <property type="entry name" value="Zip"/>
    <property type="match status" value="1"/>
</dbReference>
<accession>A0A0H3LM39</accession>
<comment type="function">
    <text evidence="1">Selective electrodiffusional channel that mediates the uptake of Zn(2+). Exploits in vivo zinc concentration gradients (maintained by cellular zinc homeostasis) to passively move zinc ions into the cytoplasm. ZIPB-mediated zinc flux is dependent upon pH, but independent of the proton motive force. Is also able to import Cd(2+), but is not permeable to Co(2+), Cu(2+), Fe(2+), Mn(2+) and Ni(2+).</text>
</comment>
<comment type="catalytic activity">
    <reaction evidence="1">
        <text>Zn(2+)(in) = Zn(2+)(out)</text>
        <dbReference type="Rhea" id="RHEA:29351"/>
        <dbReference type="ChEBI" id="CHEBI:29105"/>
    </reaction>
</comment>
<comment type="catalytic activity">
    <reaction evidence="1">
        <text>Cd(2+)(in) = Cd(2+)(out)</text>
        <dbReference type="Rhea" id="RHEA:28707"/>
        <dbReference type="ChEBI" id="CHEBI:48775"/>
    </reaction>
</comment>
<comment type="subunit">
    <text evidence="1 2">Homodimer (PubMed:20876577, PubMed:28875161). Also exists as a monomer (PubMed:28875161).</text>
</comment>
<comment type="subcellular location">
    <subcellularLocation>
        <location>Cell inner membrane</location>
        <topology>Multi-pass membrane protein</topology>
    </subcellularLocation>
</comment>
<comment type="domain">
    <text evidence="4">Has an additional transmembrane segment in the N-terminus compared to many other ZIP family members. This extra helix is important for activity in vivo.</text>
</comment>
<comment type="domain">
    <text evidence="2 3 9">The two metal binding sites M1 and M2 that are halfway through the membrane form a binuclear metal center. The multiple conserved zinc-binding sites (M1,M5, M6 and M3) appear to constitute a route of zinc release to the cytoplasm (PubMed:28875161). M1 is the primary transport site essential for activity, whereas M2 plays an auxiliary role presumably by serving as an additional transport site and modulating the properties of the primary transport site (PubMed:31914589). Cd(2+) at M1 can readily be replaced by externally added Zn(2+), whereas Cd(2+) at M2 cannot (PubMed:28875161, PubMed:31914589). ZIP proteins seem to operate via a two-domain elevator-type mechanism for zinc transport (Probable).</text>
</comment>
<comment type="miscellaneous">
    <text evidence="1">The zinc flux through ZIPB is extremely slow in comparison with typical ion channels and is nonsaturating with respect to a zinc concentration up to 2 mM.</text>
</comment>
<comment type="similarity">
    <text evidence="7">Belongs to the ZIP transporter (TC 2.A.5) family.</text>
</comment>
<feature type="chain" id="PRO_0000458195" description="Zinc transporter ZIPB">
    <location>
        <begin position="1"/>
        <end position="309"/>
    </location>
</feature>
<feature type="topological domain" description="Periplasmic" evidence="4">
    <location>
        <begin position="1"/>
        <end position="22"/>
    </location>
</feature>
<feature type="transmembrane region" description="Helical" evidence="4">
    <location>
        <begin position="23"/>
        <end position="50"/>
    </location>
</feature>
<feature type="topological domain" description="Extracellular" evidence="4">
    <location>
        <begin position="51"/>
        <end position="55"/>
    </location>
</feature>
<feature type="transmembrane region" description="Helical" evidence="2">
    <location>
        <begin position="56"/>
        <end position="81"/>
    </location>
</feature>
<feature type="topological domain" description="Periplasmic" evidence="8">
    <location>
        <begin position="82"/>
        <end position="83"/>
    </location>
</feature>
<feature type="transmembrane region" description="Helical" evidence="2">
    <location>
        <begin position="84"/>
        <end position="119"/>
    </location>
</feature>
<feature type="topological domain" description="Extracellular" evidence="8">
    <location>
        <begin position="120"/>
        <end position="121"/>
    </location>
</feature>
<feature type="transmembrane region" description="Helical" evidence="2">
    <location>
        <begin position="122"/>
        <end position="145"/>
    </location>
</feature>
<feature type="topological domain" description="Periplasmic" evidence="8">
    <location>
        <begin position="146"/>
        <end position="165"/>
    </location>
</feature>
<feature type="transmembrane region" description="Helical" evidence="2">
    <location>
        <begin position="166"/>
        <end position="190"/>
    </location>
</feature>
<feature type="topological domain" description="Extracellular" evidence="8">
    <location>
        <begin position="191"/>
        <end position="192"/>
    </location>
</feature>
<feature type="transmembrane region" description="Helical" evidence="2">
    <location>
        <begin position="193"/>
        <end position="222"/>
    </location>
</feature>
<feature type="topological domain" description="Periplasmic" evidence="8">
    <location>
        <begin position="223"/>
        <end position="224"/>
    </location>
</feature>
<feature type="transmembrane region" description="Helical" evidence="2">
    <location>
        <begin position="225"/>
        <end position="251"/>
    </location>
</feature>
<feature type="topological domain" description="Extracellular" evidence="8">
    <location>
        <begin position="252"/>
        <end position="255"/>
    </location>
</feature>
<feature type="transmembrane region" description="Helical" evidence="2">
    <location>
        <begin position="256"/>
        <end position="275"/>
    </location>
</feature>
<feature type="topological domain" description="Periplasmic" evidence="8">
    <location>
        <begin position="276"/>
        <end position="287"/>
    </location>
</feature>
<feature type="transmembrane region" description="Helical" evidence="2">
    <location>
        <begin position="288"/>
        <end position="308"/>
    </location>
</feature>
<feature type="topological domain" description="Extracellular" evidence="8">
    <location>
        <position position="309"/>
    </location>
</feature>
<feature type="binding site" description="M7 metal binding site" evidence="2 11">
    <location>
        <position position="89"/>
    </location>
    <ligand>
        <name>Zn(2+)</name>
        <dbReference type="ChEBI" id="CHEBI:29105"/>
        <label>5</label>
    </ligand>
</feature>
<feature type="binding site" description="M1 metal binding site" evidence="2 3 4 12 13 14">
    <location>
        <position position="99"/>
    </location>
    <ligand>
        <name>Cd(2+)</name>
        <dbReference type="ChEBI" id="CHEBI:48775"/>
        <label>1</label>
    </ligand>
</feature>
<feature type="binding site" description="M3 metal binding site" evidence="2 12">
    <location>
        <position position="144"/>
    </location>
    <ligand>
        <name>Cd(2+)</name>
        <dbReference type="ChEBI" id="CHEBI:48775"/>
        <label>3</label>
    </ligand>
</feature>
<feature type="binding site" description="M3 metal binding site" evidence="2 11">
    <location>
        <position position="144"/>
    </location>
    <ligand>
        <name>Zn(2+)</name>
        <dbReference type="ChEBI" id="CHEBI:29105"/>
        <label>3</label>
    </ligand>
</feature>
<feature type="binding site" description="M6 metal binding site" evidence="2 11">
    <location>
        <position position="144"/>
    </location>
    <ligand>
        <name>Zn(2+)</name>
        <dbReference type="ChEBI" id="CHEBI:29105"/>
        <label>4</label>
    </ligand>
</feature>
<feature type="binding site" description="M1 metal binding site" evidence="2 3 4 12 13 14">
    <location>
        <position position="177"/>
    </location>
    <ligand>
        <name>Cd(2+)</name>
        <dbReference type="ChEBI" id="CHEBI:48775"/>
        <label>1</label>
    </ligand>
</feature>
<feature type="binding site" description="M5 metal binding site" evidence="2 11">
    <location>
        <position position="177"/>
    </location>
    <ligand>
        <name>Zn(2+)</name>
        <dbReference type="ChEBI" id="CHEBI:29105"/>
        <label>2</label>
    </ligand>
</feature>
<feature type="binding site" description="M2 metal binding site" evidence="2 11 12">
    <location>
        <position position="178"/>
    </location>
    <ligand>
        <name>Cd(2+)</name>
        <dbReference type="ChEBI" id="CHEBI:48775"/>
        <label>2</label>
    </ligand>
</feature>
<feature type="binding site" description="M1 metal binding site" evidence="2 3 4 12 13 14">
    <location>
        <position position="181"/>
    </location>
    <ligand>
        <name>Cd(2+)</name>
        <dbReference type="ChEBI" id="CHEBI:48775"/>
        <label>1</label>
    </ligand>
</feature>
<feature type="binding site" description="M2 metal binding site" evidence="2 11 12">
    <location>
        <position position="181"/>
    </location>
    <ligand>
        <name>Cd(2+)</name>
        <dbReference type="ChEBI" id="CHEBI:48775"/>
        <label>2</label>
    </ligand>
</feature>
<feature type="binding site" description="M1 metal binding site" evidence="2 11">
    <location>
        <position position="181"/>
    </location>
    <ligand>
        <name>Zn(2+)</name>
        <dbReference type="ChEBI" id="CHEBI:29105"/>
        <label>1</label>
    </ligand>
</feature>
<feature type="binding site" description="M1 metal binding site" evidence="2 3 4 12 13 14">
    <location>
        <position position="207"/>
    </location>
    <ligand>
        <name>Cd(2+)</name>
        <dbReference type="ChEBI" id="CHEBI:48775"/>
        <label>1</label>
    </ligand>
</feature>
<feature type="binding site" description="M1 metal binding site" evidence="2 11">
    <location>
        <position position="207"/>
    </location>
    <ligand>
        <name>Zn(2+)</name>
        <dbReference type="ChEBI" id="CHEBI:29105"/>
        <label>1</label>
    </ligand>
</feature>
<feature type="binding site" description="M2 metal binding site" evidence="2 11 12">
    <location>
        <position position="208"/>
    </location>
    <ligand>
        <name>Cd(2+)</name>
        <dbReference type="ChEBI" id="CHEBI:48775"/>
        <label>2</label>
    </ligand>
</feature>
<feature type="binding site" description="M1 metal binding site" evidence="2 3 4 12 13 14">
    <location>
        <position position="211"/>
    </location>
    <ligand>
        <name>Cd(2+)</name>
        <dbReference type="ChEBI" id="CHEBI:48775"/>
        <label>1</label>
    </ligand>
</feature>
<feature type="binding site" description="M2 metal binding site" evidence="2 11 12">
    <location>
        <position position="211"/>
    </location>
    <ligand>
        <name>Cd(2+)</name>
        <dbReference type="ChEBI" id="CHEBI:48775"/>
        <label>2</label>
    </ligand>
</feature>
<feature type="binding site" description="M1 metal binding site" evidence="2 11">
    <location>
        <position position="211"/>
    </location>
    <ligand>
        <name>Zn(2+)</name>
        <dbReference type="ChEBI" id="CHEBI:29105"/>
        <label>1</label>
    </ligand>
</feature>
<feature type="binding site" description="M2 metal binding site" evidence="2 11 12">
    <location>
        <position position="240"/>
    </location>
    <ligand>
        <name>Cd(2+)</name>
        <dbReference type="ChEBI" id="CHEBI:48775"/>
        <label>2</label>
    </ligand>
</feature>
<feature type="binding site" description="M3 metal binding site" evidence="2 12">
    <location>
        <position position="275"/>
    </location>
    <ligand>
        <name>Cd(2+)</name>
        <dbReference type="ChEBI" id="CHEBI:48775"/>
        <label>3</label>
    </ligand>
</feature>
<feature type="binding site" description="M3 metal binding site" evidence="2 11">
    <location>
        <position position="275"/>
    </location>
    <ligand>
        <name>Zn(2+)</name>
        <dbReference type="ChEBI" id="CHEBI:29105"/>
        <label>3</label>
    </ligand>
</feature>
<feature type="binding site" description="M5 metal binding site" evidence="2 11">
    <location>
        <position position="276"/>
    </location>
    <ligand>
        <name>Zn(2+)</name>
        <dbReference type="ChEBI" id="CHEBI:29105"/>
        <label>2</label>
    </ligand>
</feature>
<feature type="binding site" description="M7 metal binding site" evidence="2 11">
    <location>
        <position position="286"/>
    </location>
    <ligand>
        <name>Zn(2+)</name>
        <dbReference type="ChEBI" id="CHEBI:29105"/>
        <label>5</label>
    </ligand>
</feature>
<feature type="mutagenesis site" description="Is more tolerant to high Zn(2+) or Cd(2+) concentrations due to a decreased metal uptake ability." evidence="4">
    <original>S</original>
    <variation>A</variation>
    <location>
        <position position="106"/>
    </location>
</feature>
<feature type="mutagenesis site" description="Is more tolerant to high Zn(2+) or Cd(2+) concentrations due to a decreased metal uptake ability." evidence="4">
    <original>D</original>
    <variation>A</variation>
    <location>
        <position position="144"/>
    </location>
</feature>
<feature type="mutagenesis site" description="Loses metal binding at M2 but does not lead to significant changes in either overall structure or metal coordination at M1; when associated with A-208 and A-240." evidence="3">
    <original>N</original>
    <variation>A</variation>
    <location>
        <position position="178"/>
    </location>
</feature>
<feature type="mutagenesis site" description="Loses metal binding at M2 but does not lead to significant changes in either overall structure or metal coordination at M1; when associated with A-178 and A-240." evidence="3">
    <original>D</original>
    <variation>A</variation>
    <location>
        <position position="208"/>
    </location>
</feature>
<feature type="mutagenesis site" description="Loses metal binding at M2 but does not lead to significant changes in either overall structure or metal coordination at M1; when associated with A-178 and A-208." evidence="3">
    <original>E</original>
    <variation>A</variation>
    <location>
        <position position="240"/>
    </location>
</feature>
<feature type="mutagenesis site" description="Is more tolerant to high Zn(2+) or Cd(2+) concentrations due to a decreased metal uptake ability." evidence="4">
    <original>E</original>
    <variation>A</variation>
    <location>
        <position position="276"/>
    </location>
</feature>
<feature type="helix" evidence="18">
    <location>
        <begin position="7"/>
        <end position="21"/>
    </location>
</feature>
<feature type="helix" evidence="17">
    <location>
        <begin position="24"/>
        <end position="47"/>
    </location>
</feature>
<feature type="helix" evidence="16">
    <location>
        <begin position="54"/>
        <end position="80"/>
    </location>
</feature>
<feature type="helix" evidence="16">
    <location>
        <begin position="85"/>
        <end position="105"/>
    </location>
</feature>
<feature type="helix" evidence="16">
    <location>
        <begin position="108"/>
        <end position="118"/>
    </location>
</feature>
<feature type="helix" evidence="16">
    <location>
        <begin position="123"/>
        <end position="146"/>
    </location>
</feature>
<feature type="strand" evidence="19">
    <location>
        <begin position="152"/>
        <end position="154"/>
    </location>
</feature>
<feature type="strand" evidence="19">
    <location>
        <begin position="156"/>
        <end position="159"/>
    </location>
</feature>
<feature type="helix" evidence="16">
    <location>
        <begin position="166"/>
        <end position="188"/>
    </location>
</feature>
<feature type="turn" evidence="16">
    <location>
        <begin position="189"/>
        <end position="191"/>
    </location>
</feature>
<feature type="helix" evidence="16">
    <location>
        <begin position="194"/>
        <end position="221"/>
    </location>
</feature>
<feature type="helix" evidence="16">
    <location>
        <begin position="226"/>
        <end position="236"/>
    </location>
</feature>
<feature type="helix" evidence="16">
    <location>
        <begin position="239"/>
        <end position="251"/>
    </location>
</feature>
<feature type="strand" evidence="16">
    <location>
        <begin position="252"/>
        <end position="254"/>
    </location>
</feature>
<feature type="helix" evidence="16">
    <location>
        <begin position="257"/>
        <end position="274"/>
    </location>
</feature>
<feature type="helix" evidence="17">
    <location>
        <begin position="278"/>
        <end position="282"/>
    </location>
</feature>
<feature type="helix" evidence="16">
    <location>
        <begin position="287"/>
        <end position="307"/>
    </location>
</feature>
<name>ZIP_BORBR</name>
<reference key="1">
    <citation type="journal article" date="2003" name="Nat. Genet.">
        <title>Comparative analysis of the genome sequences of Bordetella pertussis, Bordetella parapertussis and Bordetella bronchiseptica.</title>
        <authorList>
            <person name="Parkhill J."/>
            <person name="Sebaihia M."/>
            <person name="Preston A."/>
            <person name="Murphy L.D."/>
            <person name="Thomson N.R."/>
            <person name="Harris D.E."/>
            <person name="Holden M.T.G."/>
            <person name="Churcher C.M."/>
            <person name="Bentley S.D."/>
            <person name="Mungall K.L."/>
            <person name="Cerdeno-Tarraga A.-M."/>
            <person name="Temple L."/>
            <person name="James K.D."/>
            <person name="Harris B."/>
            <person name="Quail M.A."/>
            <person name="Achtman M."/>
            <person name="Atkin R."/>
            <person name="Baker S."/>
            <person name="Basham D."/>
            <person name="Bason N."/>
            <person name="Cherevach I."/>
            <person name="Chillingworth T."/>
            <person name="Collins M."/>
            <person name="Cronin A."/>
            <person name="Davis P."/>
            <person name="Doggett J."/>
            <person name="Feltwell T."/>
            <person name="Goble A."/>
            <person name="Hamlin N."/>
            <person name="Hauser H."/>
            <person name="Holroyd S."/>
            <person name="Jagels K."/>
            <person name="Leather S."/>
            <person name="Moule S."/>
            <person name="Norberczak H."/>
            <person name="O'Neil S."/>
            <person name="Ormond D."/>
            <person name="Price C."/>
            <person name="Rabbinowitsch E."/>
            <person name="Rutter S."/>
            <person name="Sanders M."/>
            <person name="Saunders D."/>
            <person name="Seeger K."/>
            <person name="Sharp S."/>
            <person name="Simmonds M."/>
            <person name="Skelton J."/>
            <person name="Squares R."/>
            <person name="Squares S."/>
            <person name="Stevens K."/>
            <person name="Unwin L."/>
            <person name="Whitehead S."/>
            <person name="Barrell B.G."/>
            <person name="Maskell D.J."/>
        </authorList>
    </citation>
    <scope>NUCLEOTIDE SEQUENCE [LARGE SCALE GENOMIC DNA]</scope>
    <source>
        <strain>ATCC BAA-588 / NCTC 13252 / RB50</strain>
    </source>
</reference>
<reference key="2">
    <citation type="journal article" date="2010" name="J. Biol. Chem.">
        <title>Selective electrodiffusion of zinc ions in a Zrt-, Irt-like protein, ZIPB.</title>
        <authorList>
            <person name="Lin W."/>
            <person name="Chai J."/>
            <person name="Love J."/>
            <person name="Fu D."/>
        </authorList>
    </citation>
    <scope>FUNCTION</scope>
    <scope>TRANSPORTER ACTIVITY</scope>
    <scope>SUBSTRATE SPECIFICITY</scope>
    <scope>SUBUNIT</scope>
    <source>
        <strain>ATCC BAA-588 / NCTC 13252 / RB50</strain>
    </source>
</reference>
<reference evidence="11 12" key="3">
    <citation type="journal article" date="2017" name="Sci. Adv.">
        <title>Crystal structures of a ZIP zinc transporter reveal a binuclear metal center in the transport pathway.</title>
        <authorList>
            <person name="Zhang T."/>
            <person name="Liu J."/>
            <person name="Fellner M."/>
            <person name="Zhang C."/>
            <person name="Sui D."/>
            <person name="Hu J."/>
        </authorList>
    </citation>
    <scope>X-RAY CRYSTALLOGRAPHY (2.40 ANGSTROMS) IN COMPLEXES WITH CD(2+) AND ZN(2+)</scope>
    <scope>TOPOLOGY</scope>
    <scope>SUBUNIT</scope>
    <source>
        <strain>ATCC BAA-588 / NCTC 13252 / RB50</strain>
    </source>
</reference>
<reference evidence="13" key="4">
    <citation type="journal article" date="2020" name="FASEB J.">
        <title>Asymmetric functions of a binuclear metal center within the transport pathway of a human zinc transporter ZIP4.</title>
        <authorList>
            <person name="Zhang T."/>
            <person name="Sui D."/>
            <person name="Zhang C."/>
            <person name="Cole L."/>
            <person name="Hu J."/>
        </authorList>
    </citation>
    <scope>X-RAY CRYSTALLOGRAPHY (3.50 ANGSTROMS) OF TRIPLE MUTANT ALA-178/ALA-208/ALA-240 IN COMPLEX WITH CD(2+)</scope>
    <scope>MUTAGENESIS OF ASN-178; ASP-208 AND GLU-240</scope>
    <source>
        <strain>ATCC BAA-588 / NCTC 13252 / RB50</strain>
    </source>
</reference>
<reference evidence="14 15" key="5">
    <citation type="journal article" date="2022" name="Sci. Adv.">
        <title>The two-domain elevator-type mechanism of zinc-transporting ZIP proteins.</title>
        <authorList>
            <person name="Wiuf A."/>
            <person name="Steffen J.H."/>
            <person name="Becares E.R."/>
            <person name="Gronberg C."/>
            <person name="Mahato D.R."/>
            <person name="Rasmussen S.G.F."/>
            <person name="Andersson M."/>
            <person name="Croll T."/>
            <person name="Gotfryd K."/>
            <person name="Gourdon P."/>
        </authorList>
    </citation>
    <scope>X-RAY CRYSTALLOGRAPHY (2.51 ANGSTROMS) IN A METAL-STRIPPED STATE AND IN COMPLEX WITH CD(2+)</scope>
    <scope>TRANSPORT MECHANISM</scope>
    <scope>MUTAGENESIS OF SER-106; ASP-144 AND GLU-276</scope>
    <scope>TOPOLOGY</scope>
    <scope>DOMAIN</scope>
    <source>
        <strain>ATCC BAA-588 / NCTC 13252 / RB50</strain>
    </source>
</reference>
<proteinExistence type="evidence at protein level"/>
<evidence type="ECO:0000269" key="1">
    <source>
    </source>
</evidence>
<evidence type="ECO:0000269" key="2">
    <source>
    </source>
</evidence>
<evidence type="ECO:0000269" key="3">
    <source>
    </source>
</evidence>
<evidence type="ECO:0000269" key="4">
    <source>
    </source>
</evidence>
<evidence type="ECO:0000303" key="5">
    <source>
    </source>
</evidence>
<evidence type="ECO:0000303" key="6">
    <source>
    </source>
</evidence>
<evidence type="ECO:0000305" key="7"/>
<evidence type="ECO:0000305" key="8">
    <source>
    </source>
</evidence>
<evidence type="ECO:0000305" key="9">
    <source>
    </source>
</evidence>
<evidence type="ECO:0000312" key="10">
    <source>
        <dbReference type="EMBL" id="CAE32899.1"/>
    </source>
</evidence>
<evidence type="ECO:0007744" key="11">
    <source>
        <dbReference type="PDB" id="5TSA"/>
    </source>
</evidence>
<evidence type="ECO:0007744" key="12">
    <source>
        <dbReference type="PDB" id="5TSB"/>
    </source>
</evidence>
<evidence type="ECO:0007744" key="13">
    <source>
        <dbReference type="PDB" id="6PGI"/>
    </source>
</evidence>
<evidence type="ECO:0007744" key="14">
    <source>
        <dbReference type="PDB" id="7Z6M"/>
    </source>
</evidence>
<evidence type="ECO:0007744" key="15">
    <source>
        <dbReference type="PDB" id="7Z6N"/>
    </source>
</evidence>
<evidence type="ECO:0007829" key="16">
    <source>
        <dbReference type="PDB" id="5TSA"/>
    </source>
</evidence>
<evidence type="ECO:0007829" key="17">
    <source>
        <dbReference type="PDB" id="7Z6N"/>
    </source>
</evidence>
<evidence type="ECO:0007829" key="18">
    <source>
        <dbReference type="PDB" id="8CZJ"/>
    </source>
</evidence>
<evidence type="ECO:0007829" key="19">
    <source>
        <dbReference type="PDB" id="8GHT"/>
    </source>
</evidence>
<organism>
    <name type="scientific">Bordetella bronchiseptica (strain ATCC BAA-588 / NCTC 13252 / RB50)</name>
    <name type="common">Alcaligenes bronchisepticus</name>
    <dbReference type="NCBI Taxonomy" id="257310"/>
    <lineage>
        <taxon>Bacteria</taxon>
        <taxon>Pseudomonadati</taxon>
        <taxon>Pseudomonadota</taxon>
        <taxon>Betaproteobacteria</taxon>
        <taxon>Burkholderiales</taxon>
        <taxon>Alcaligenaceae</taxon>
        <taxon>Bordetella</taxon>
    </lineage>
</organism>
<keyword id="KW-0002">3D-structure</keyword>
<keyword id="KW-0104">Cadmium</keyword>
<keyword id="KW-0997">Cell inner membrane</keyword>
<keyword id="KW-1003">Cell membrane</keyword>
<keyword id="KW-0406">Ion transport</keyword>
<keyword id="KW-0472">Membrane</keyword>
<keyword id="KW-0812">Transmembrane</keyword>
<keyword id="KW-1133">Transmembrane helix</keyword>
<keyword id="KW-0813">Transport</keyword>
<keyword id="KW-0862">Zinc</keyword>
<keyword id="KW-0864">Zinc transport</keyword>